<name>SSPP_STAAW</name>
<keyword id="KW-0378">Hydrolase</keyword>
<keyword id="KW-0645">Protease</keyword>
<keyword id="KW-0964">Secreted</keyword>
<keyword id="KW-0732">Signal</keyword>
<keyword id="KW-0788">Thiol protease</keyword>
<keyword id="KW-0843">Virulence</keyword>
<keyword id="KW-0865">Zymogen</keyword>
<comment type="function">
    <text evidence="2">Cysteine protease that plays an important role in the inhibition of host innate immune response. Cleaves host elastins found in connective tissues, pulmonary surfactant protein A in the lungs, and the chemokine receptor CXCR2 on leukocytes. Proteolytic cleavage of surfactant protein A impairs bacterial phagocytosis by neutrophils while CXCR2 degradation blocks neutrophil activation and chemotaxis. Additionally, promotes vascular leakage by activating the plasma kallikerin/kinin system, resulting in hypotension.</text>
</comment>
<comment type="catalytic activity">
    <reaction>
        <text>Broad endopeptidase action on proteins including elastin, but rather limited hydrolysis of small-molecule substrates. Assays are conveniently made with hemoglobin, casein or Z-Phe-Arg-NHMec as substrate.</text>
        <dbReference type="EC" id="3.4.22.48"/>
    </reaction>
</comment>
<comment type="activity regulation">
    <text evidence="1">Prematurely activated/folded staphopain A is inhibited by staphostatin A (ScpB), which is probably required to protect staphylococcal cytoplasmic proteins from degradation by ScpA.</text>
</comment>
<comment type="subunit">
    <text evidence="1">In the cytoplasm, prematurely activated/folded ScpA forms a stable non-covalent complex with ScpB.</text>
</comment>
<comment type="subcellular location">
    <subcellularLocation>
        <location evidence="2">Secreted</location>
    </subcellularLocation>
</comment>
<comment type="PTM">
    <text evidence="1">Cleavage leads to the activation of ScpA probably by an auto-catalytic manner.</text>
</comment>
<comment type="miscellaneous">
    <text evidence="1">The catalytic maturation of ScpA appears to reside outside the cascade of activation started by the metalloprotease aureolysin (aur).</text>
</comment>
<comment type="similarity">
    <text evidence="5">Belongs to the peptidase C47 family.</text>
</comment>
<dbReference type="EC" id="3.4.22.48"/>
<dbReference type="EMBL" id="BA000033">
    <property type="protein sequence ID" value="BAB95715.1"/>
    <property type="molecule type" value="Genomic_DNA"/>
</dbReference>
<dbReference type="RefSeq" id="WP_000827761.1">
    <property type="nucleotide sequence ID" value="NC_003923.1"/>
</dbReference>
<dbReference type="SMR" id="Q8NVS9"/>
<dbReference type="MEROPS" id="C47.001"/>
<dbReference type="KEGG" id="sam:MW1850"/>
<dbReference type="HOGENOM" id="CLU_069043_0_0_9"/>
<dbReference type="PRO" id="PR:Q8NVS9"/>
<dbReference type="GO" id="GO:0005576">
    <property type="term" value="C:extracellular region"/>
    <property type="evidence" value="ECO:0007669"/>
    <property type="project" value="UniProtKB-SubCell"/>
</dbReference>
<dbReference type="GO" id="GO:0008234">
    <property type="term" value="F:cysteine-type peptidase activity"/>
    <property type="evidence" value="ECO:0007669"/>
    <property type="project" value="UniProtKB-KW"/>
</dbReference>
<dbReference type="GO" id="GO:0006508">
    <property type="term" value="P:proteolysis"/>
    <property type="evidence" value="ECO:0007669"/>
    <property type="project" value="UniProtKB-KW"/>
</dbReference>
<dbReference type="Gene3D" id="3.90.70.10">
    <property type="entry name" value="Cysteine proteinases"/>
    <property type="match status" value="1"/>
</dbReference>
<dbReference type="Gene3D" id="3.10.500.10">
    <property type="entry name" value="Staphopain proregion domain"/>
    <property type="match status" value="1"/>
</dbReference>
<dbReference type="InterPro" id="IPR046350">
    <property type="entry name" value="Cystatin_sf"/>
</dbReference>
<dbReference type="InterPro" id="IPR038765">
    <property type="entry name" value="Papain-like_cys_pep_sf"/>
</dbReference>
<dbReference type="InterPro" id="IPR025660">
    <property type="entry name" value="Pept_his_AS"/>
</dbReference>
<dbReference type="InterPro" id="IPR008750">
    <property type="entry name" value="Peptidase_C47"/>
</dbReference>
<dbReference type="InterPro" id="IPR028076">
    <property type="entry name" value="Staphopain_pro"/>
</dbReference>
<dbReference type="InterPro" id="IPR037155">
    <property type="entry name" value="Staphopain_pro_sf"/>
</dbReference>
<dbReference type="Pfam" id="PF05543">
    <property type="entry name" value="Peptidase_C47"/>
    <property type="match status" value="1"/>
</dbReference>
<dbReference type="Pfam" id="PF14731">
    <property type="entry name" value="Staphopain_pro"/>
    <property type="match status" value="1"/>
</dbReference>
<dbReference type="SUPFAM" id="SSF54403">
    <property type="entry name" value="Cystatin/monellin"/>
    <property type="match status" value="1"/>
</dbReference>
<dbReference type="SUPFAM" id="SSF54001">
    <property type="entry name" value="Cysteine proteinases"/>
    <property type="match status" value="1"/>
</dbReference>
<dbReference type="PROSITE" id="PS00639">
    <property type="entry name" value="THIOL_PROTEASE_HIS"/>
    <property type="match status" value="1"/>
</dbReference>
<accession>Q8NVS9</accession>
<protein>
    <recommendedName>
        <fullName>Staphopain A</fullName>
        <ecNumber>3.4.22.48</ecNumber>
    </recommendedName>
    <alternativeName>
        <fullName>Staphylococcal cysteine proteinase A</fullName>
    </alternativeName>
    <alternativeName>
        <fullName>Staphylopain A</fullName>
    </alternativeName>
</protein>
<gene>
    <name type="primary">sspP</name>
    <name type="synonym">scpA</name>
    <name type="ordered locus">MW1850</name>
</gene>
<evidence type="ECO:0000250" key="1"/>
<evidence type="ECO:0000250" key="2">
    <source>
        <dbReference type="UniProtKB" id="P81297"/>
    </source>
</evidence>
<evidence type="ECO:0000255" key="3"/>
<evidence type="ECO:0000255" key="4">
    <source>
        <dbReference type="PROSITE-ProRule" id="PRU10089"/>
    </source>
</evidence>
<evidence type="ECO:0000305" key="5"/>
<sequence length="388" mass="44142">MKRNFPKLIALSLILSLSVTPIANAESNSNIKAKDKKHVQVNVEDKSIPTEVRNLAQKDYLSYVTSLDKIYNKEKASYTLGEPFKIYKFNKKSDGNYYFPVLNTEGNIDYIVTISPKVTKYSSSSSKYTINVSPFLSKVLNQYKDQQITILTNSKGYYVVTQNHKAKLVLKTPRLEDKKLKKTESIPTGNNVTQLKQKASVTMPTSQFKSNNYTYNEQYVNKLENFKIRETQGNNGWCAGYTMSALLNATYNTNKYHAEAVMRFLHPNLQGQRFQFTGLTPREMIYFGQTQGRSPQLLNRMTTYNEVDNLTKNNKGIAVLGSRVESRNGMHAGHAMAVVGNAKLDNGQEVIIIWNPWDNGFMTQDAKNNVIPVSNGDHYQWYSSIYGY</sequence>
<proteinExistence type="inferred from homology"/>
<feature type="signal peptide" evidence="3">
    <location>
        <begin position="1"/>
        <end position="25"/>
    </location>
</feature>
<feature type="propeptide" id="PRO_0000026557" evidence="1">
    <location>
        <begin position="26"/>
        <end position="214"/>
    </location>
</feature>
<feature type="chain" id="PRO_0000026558" description="Staphopain A">
    <location>
        <begin position="215"/>
        <end position="388"/>
    </location>
</feature>
<feature type="active site" evidence="4">
    <location>
        <position position="238"/>
    </location>
</feature>
<feature type="active site" evidence="4">
    <location>
        <position position="334"/>
    </location>
</feature>
<feature type="active site" evidence="4">
    <location>
        <position position="355"/>
    </location>
</feature>
<feature type="site" description="Cleavage" evidence="1">
    <location>
        <begin position="214"/>
        <end position="215"/>
    </location>
</feature>
<reference key="1">
    <citation type="journal article" date="2002" name="Lancet">
        <title>Genome and virulence determinants of high virulence community-acquired MRSA.</title>
        <authorList>
            <person name="Baba T."/>
            <person name="Takeuchi F."/>
            <person name="Kuroda M."/>
            <person name="Yuzawa H."/>
            <person name="Aoki K."/>
            <person name="Oguchi A."/>
            <person name="Nagai Y."/>
            <person name="Iwama N."/>
            <person name="Asano K."/>
            <person name="Naimi T."/>
            <person name="Kuroda H."/>
            <person name="Cui L."/>
            <person name="Yamamoto K."/>
            <person name="Hiramatsu K."/>
        </authorList>
    </citation>
    <scope>NUCLEOTIDE SEQUENCE [LARGE SCALE GENOMIC DNA]</scope>
    <source>
        <strain>MW2</strain>
    </source>
</reference>
<organism>
    <name type="scientific">Staphylococcus aureus (strain MW2)</name>
    <dbReference type="NCBI Taxonomy" id="196620"/>
    <lineage>
        <taxon>Bacteria</taxon>
        <taxon>Bacillati</taxon>
        <taxon>Bacillota</taxon>
        <taxon>Bacilli</taxon>
        <taxon>Bacillales</taxon>
        <taxon>Staphylococcaceae</taxon>
        <taxon>Staphylococcus</taxon>
    </lineage>
</organism>